<comment type="function">
    <text evidence="1">Catalyzes the formation of 3-(3-amino-3-carboxypropyl)uridine (acp3U) at position 20 in the D-loop of several cytoplasmic tRNAs (acp3U(20)).</text>
</comment>
<comment type="catalytic activity">
    <reaction evidence="1">
        <text>a uridine in tRNA + S-adenosyl-L-methionine = a 3-[(3S)-3-amino-3-carboxypropyl]uridine in tRNA + S-methyl-5'-thioadenosine + H(+)</text>
        <dbReference type="Rhea" id="RHEA:62432"/>
        <dbReference type="Rhea" id="RHEA-COMP:13339"/>
        <dbReference type="Rhea" id="RHEA-COMP:16092"/>
        <dbReference type="ChEBI" id="CHEBI:15378"/>
        <dbReference type="ChEBI" id="CHEBI:17509"/>
        <dbReference type="ChEBI" id="CHEBI:59789"/>
        <dbReference type="ChEBI" id="CHEBI:65315"/>
        <dbReference type="ChEBI" id="CHEBI:82930"/>
        <dbReference type="EC" id="2.5.1.25"/>
    </reaction>
</comment>
<comment type="subcellular location">
    <subcellularLocation>
        <location evidence="1">Nucleus</location>
    </subcellularLocation>
</comment>
<comment type="alternative products">
    <event type="alternative splicing"/>
    <isoform>
        <id>Q8N5C7-1</id>
        <name>1</name>
        <sequence type="displayed"/>
    </isoform>
    <isoform>
        <id>Q8N5C7-2</id>
        <name>2</name>
        <sequence type="described" ref="VSP_028922"/>
    </isoform>
    <isoform>
        <id>Q8N5C7-3</id>
        <name>3</name>
        <sequence type="described" ref="VSP_028923"/>
    </isoform>
</comment>
<comment type="similarity">
    <text evidence="5">Belongs to the TDD superfamily. DTWD1 family.</text>
</comment>
<comment type="sequence caution" evidence="5">
    <conflict type="frameshift">
        <sequence resource="EMBL-CDS" id="AAF87319"/>
    </conflict>
</comment>
<accession>Q8N5C7</accession>
<accession>Q567Q3</accession>
<accession>Q8WVG9</accession>
<accession>Q9NRU6</accession>
<organism>
    <name type="scientific">Homo sapiens</name>
    <name type="common">Human</name>
    <dbReference type="NCBI Taxonomy" id="9606"/>
    <lineage>
        <taxon>Eukaryota</taxon>
        <taxon>Metazoa</taxon>
        <taxon>Chordata</taxon>
        <taxon>Craniata</taxon>
        <taxon>Vertebrata</taxon>
        <taxon>Euteleostomi</taxon>
        <taxon>Mammalia</taxon>
        <taxon>Eutheria</taxon>
        <taxon>Euarchontoglires</taxon>
        <taxon>Primates</taxon>
        <taxon>Haplorrhini</taxon>
        <taxon>Catarrhini</taxon>
        <taxon>Hominidae</taxon>
        <taxon>Homo</taxon>
    </lineage>
</organism>
<name>DTWD1_HUMAN</name>
<reference key="1">
    <citation type="submission" date="1999-07" db="EMBL/GenBank/DDBJ databases">
        <title>Novel genes expressed in hematopoietic stem/progenitor cells from myelodysplastic syndromes patient.</title>
        <authorList>
            <person name="Huang C."/>
            <person name="Zhang C."/>
            <person name="Tu Y."/>
            <person name="Gu W."/>
            <person name="Wang Y."/>
            <person name="Han Z."/>
            <person name="Chen Z."/>
            <person name="Zhou J."/>
            <person name="Gu J."/>
            <person name="Huang Q."/>
            <person name="Yu Y."/>
            <person name="Xu S."/>
            <person name="Ren S."/>
            <person name="Fu G."/>
        </authorList>
    </citation>
    <scope>NUCLEOTIDE SEQUENCE [LARGE SCALE MRNA] (ISOFORM 1)</scope>
    <source>
        <tissue>Hematopoietic stem cell</tissue>
    </source>
</reference>
<reference key="2">
    <citation type="journal article" date="2006" name="Nature">
        <title>Analysis of the DNA sequence and duplication history of human chromosome 15.</title>
        <authorList>
            <person name="Zody M.C."/>
            <person name="Garber M."/>
            <person name="Sharpe T."/>
            <person name="Young S.K."/>
            <person name="Rowen L."/>
            <person name="O'Neill K."/>
            <person name="Whittaker C.A."/>
            <person name="Kamal M."/>
            <person name="Chang J.L."/>
            <person name="Cuomo C.A."/>
            <person name="Dewar K."/>
            <person name="FitzGerald M.G."/>
            <person name="Kodira C.D."/>
            <person name="Madan A."/>
            <person name="Qin S."/>
            <person name="Yang X."/>
            <person name="Abbasi N."/>
            <person name="Abouelleil A."/>
            <person name="Arachchi H.M."/>
            <person name="Baradarani L."/>
            <person name="Birditt B."/>
            <person name="Bloom S."/>
            <person name="Bloom T."/>
            <person name="Borowsky M.L."/>
            <person name="Burke J."/>
            <person name="Butler J."/>
            <person name="Cook A."/>
            <person name="DeArellano K."/>
            <person name="DeCaprio D."/>
            <person name="Dorris L. III"/>
            <person name="Dors M."/>
            <person name="Eichler E.E."/>
            <person name="Engels R."/>
            <person name="Fahey J."/>
            <person name="Fleetwood P."/>
            <person name="Friedman C."/>
            <person name="Gearin G."/>
            <person name="Hall J.L."/>
            <person name="Hensley G."/>
            <person name="Johnson E."/>
            <person name="Jones C."/>
            <person name="Kamat A."/>
            <person name="Kaur A."/>
            <person name="Locke D.P."/>
            <person name="Madan A."/>
            <person name="Munson G."/>
            <person name="Jaffe D.B."/>
            <person name="Lui A."/>
            <person name="Macdonald P."/>
            <person name="Mauceli E."/>
            <person name="Naylor J.W."/>
            <person name="Nesbitt R."/>
            <person name="Nicol R."/>
            <person name="O'Leary S.B."/>
            <person name="Ratcliffe A."/>
            <person name="Rounsley S."/>
            <person name="She X."/>
            <person name="Sneddon K.M.B."/>
            <person name="Stewart S."/>
            <person name="Sougnez C."/>
            <person name="Stone S.M."/>
            <person name="Topham K."/>
            <person name="Vincent D."/>
            <person name="Wang S."/>
            <person name="Zimmer A.R."/>
            <person name="Birren B.W."/>
            <person name="Hood L."/>
            <person name="Lander E.S."/>
            <person name="Nusbaum C."/>
        </authorList>
    </citation>
    <scope>NUCLEOTIDE SEQUENCE [LARGE SCALE GENOMIC DNA]</scope>
</reference>
<reference key="3">
    <citation type="journal article" date="2004" name="Genome Res.">
        <title>The status, quality, and expansion of the NIH full-length cDNA project: the Mammalian Gene Collection (MGC).</title>
        <authorList>
            <consortium name="The MGC Project Team"/>
        </authorList>
    </citation>
    <scope>NUCLEOTIDE SEQUENCE [LARGE SCALE MRNA] (ISOFORMS 1; 2 AND 3)</scope>
    <source>
        <tissue>Brain</tissue>
        <tissue>Skin</tissue>
        <tissue>Thyroid</tissue>
    </source>
</reference>
<reference key="4">
    <citation type="journal article" date="2012" name="Proc. Natl. Acad. Sci. U.S.A.">
        <title>N-terminal acetylome analyses and functional insights of the N-terminal acetyltransferase NatB.</title>
        <authorList>
            <person name="Van Damme P."/>
            <person name="Lasa M."/>
            <person name="Polevoda B."/>
            <person name="Gazquez C."/>
            <person name="Elosegui-Artola A."/>
            <person name="Kim D.S."/>
            <person name="De Juan-Pardo E."/>
            <person name="Demeyer K."/>
            <person name="Hole K."/>
            <person name="Larrea E."/>
            <person name="Timmerman E."/>
            <person name="Prieto J."/>
            <person name="Arnesen T."/>
            <person name="Sherman F."/>
            <person name="Gevaert K."/>
            <person name="Aldabe R."/>
        </authorList>
    </citation>
    <scope>ACETYLATION [LARGE SCALE ANALYSIS] AT SER-2</scope>
    <scope>CLEAVAGE OF INITIATOR METHIONINE [LARGE SCALE ANALYSIS]</scope>
    <scope>IDENTIFICATION BY MASS SPECTROMETRY [LARGE SCALE ANALYSIS]</scope>
</reference>
<reference key="5">
    <citation type="journal article" date="2019" name="Nat. Commun.">
        <title>Biogenesis and functions of aminocarboxypropyluridine in tRNA.</title>
        <authorList>
            <person name="Takakura M."/>
            <person name="Ishiguro K."/>
            <person name="Akichika S."/>
            <person name="Miyauchi K."/>
            <person name="Suzuki T."/>
        </authorList>
    </citation>
    <scope>FUNCTION</scope>
    <scope>CATALYTIC ACTIVITY</scope>
    <scope>SUBCELLULAR LOCATION</scope>
</reference>
<feature type="initiator methionine" description="Removed" evidence="7">
    <location>
        <position position="1"/>
    </location>
</feature>
<feature type="chain" id="PRO_0000308212" description="tRNA-uridine aminocarboxypropyltransferase 1">
    <location>
        <begin position="2"/>
        <end position="304"/>
    </location>
</feature>
<feature type="short sequence motif" description="DXTW">
    <location>
        <begin position="206"/>
        <end position="209"/>
    </location>
</feature>
<feature type="modified residue" description="N-acetylserine" evidence="7">
    <location>
        <position position="2"/>
    </location>
</feature>
<feature type="splice variant" id="VSP_028922" description="In isoform 2." evidence="2">
    <original>MSLNPPIFLKRSEENSSKFVETKQSQTTSIASEDPLQNLCLASQEVLQKAQQSGRSKCLKCGGSRMFYCYTCYVPVENVPIEQIPLVK</original>
    <variation>M</variation>
    <location>
        <begin position="1"/>
        <end position="88"/>
    </location>
</feature>
<feature type="splice variant" id="VSP_028923" description="In isoform 3." evidence="2">
    <original>LPLKIDIIKHPNETDGKSTAIHAKLLAPEFVNIYTYPCIPEYEEKDHEVALIFPGPQSISIKDISFHLQKRIQNNVRGKNDDPDKPSFKRKRTEEQEFCDLNDSKCKGTTLKKIIFIDSTWNQTNKIFTDERLQGLLQVELKTRKTCFWRHQKGKPDTFLSTIEAIYYFLVDYHTDILKEKYRGQYDNLLFFYSFMYQLIKNAKCSGDKETGKLTH</original>
    <variation>FSLYHLGQSMVSSASKITCIG</variation>
    <location>
        <begin position="89"/>
        <end position="304"/>
    </location>
</feature>
<feature type="sequence variant" id="VAR_036757" description="In dbSNP:rs11539522.">
    <original>L</original>
    <variation>P</variation>
    <location>
        <position position="9"/>
    </location>
</feature>
<feature type="sequence variant" id="VAR_036758" description="In dbSNP:rs11539519.">
    <original>E</original>
    <variation>K</variation>
    <location>
        <position position="13"/>
    </location>
</feature>
<feature type="sequence variant" id="VAR_036759" description="In dbSNP:rs11539521.">
    <original>S</original>
    <variation>P</variation>
    <location>
        <position position="25"/>
    </location>
</feature>
<dbReference type="EC" id="2.5.1.25" evidence="1"/>
<dbReference type="EMBL" id="AF168717">
    <property type="protein sequence ID" value="AAF87319.1"/>
    <property type="status" value="ALT_FRAME"/>
    <property type="molecule type" value="mRNA"/>
</dbReference>
<dbReference type="EMBL" id="AC018927">
    <property type="status" value="NOT_ANNOTATED_CDS"/>
    <property type="molecule type" value="Genomic_DNA"/>
</dbReference>
<dbReference type="EMBL" id="BC018028">
    <property type="protein sequence ID" value="AAH18028.1"/>
    <property type="molecule type" value="mRNA"/>
</dbReference>
<dbReference type="EMBL" id="BC032535">
    <property type="protein sequence ID" value="AAH32535.1"/>
    <property type="molecule type" value="mRNA"/>
</dbReference>
<dbReference type="EMBL" id="BC093073">
    <property type="protein sequence ID" value="AAH93073.1"/>
    <property type="molecule type" value="mRNA"/>
</dbReference>
<dbReference type="CCDS" id="CCDS10132.1">
    <molecule id="Q8N5C7-1"/>
</dbReference>
<dbReference type="RefSeq" id="NP_001138427.1">
    <molecule id="Q8N5C7-1"/>
    <property type="nucleotide sequence ID" value="NM_001144955.2"/>
</dbReference>
<dbReference type="RefSeq" id="NP_064619.2">
    <molecule id="Q8N5C7-1"/>
    <property type="nucleotide sequence ID" value="NM_020234.5"/>
</dbReference>
<dbReference type="RefSeq" id="XP_016877908.1">
    <property type="nucleotide sequence ID" value="XM_017022419.1"/>
</dbReference>
<dbReference type="RefSeq" id="XP_016877909.1">
    <property type="nucleotide sequence ID" value="XM_017022420.1"/>
</dbReference>
<dbReference type="RefSeq" id="XP_016877910.1">
    <property type="nucleotide sequence ID" value="XM_017022421.1"/>
</dbReference>
<dbReference type="RefSeq" id="XP_016877911.1">
    <property type="nucleotide sequence ID" value="XM_017022422.1"/>
</dbReference>
<dbReference type="RefSeq" id="XP_016877916.1">
    <property type="nucleotide sequence ID" value="XM_017022427.1"/>
</dbReference>
<dbReference type="RefSeq" id="XP_016877917.1">
    <property type="nucleotide sequence ID" value="XM_017022428.1"/>
</dbReference>
<dbReference type="RefSeq" id="XP_016877918.1">
    <property type="nucleotide sequence ID" value="XM_017022429.1"/>
</dbReference>
<dbReference type="RefSeq" id="XP_016877919.1">
    <property type="nucleotide sequence ID" value="XM_017022430.1"/>
</dbReference>
<dbReference type="RefSeq" id="XP_016877920.1">
    <property type="nucleotide sequence ID" value="XM_017022431.1"/>
</dbReference>
<dbReference type="BioGRID" id="121303">
    <property type="interactions" value="18"/>
</dbReference>
<dbReference type="FunCoup" id="Q8N5C7">
    <property type="interactions" value="1974"/>
</dbReference>
<dbReference type="IntAct" id="Q8N5C7">
    <property type="interactions" value="12"/>
</dbReference>
<dbReference type="STRING" id="9606.ENSP00000251250"/>
<dbReference type="iPTMnet" id="Q8N5C7"/>
<dbReference type="PhosphoSitePlus" id="Q8N5C7"/>
<dbReference type="BioMuta" id="DTWD1"/>
<dbReference type="DMDM" id="74728976"/>
<dbReference type="jPOST" id="Q8N5C7"/>
<dbReference type="MassIVE" id="Q8N5C7"/>
<dbReference type="PaxDb" id="9606-ENSP00000251250"/>
<dbReference type="PeptideAtlas" id="Q8N5C7"/>
<dbReference type="ProteomicsDB" id="72032">
    <molecule id="Q8N5C7-1"/>
</dbReference>
<dbReference type="ProteomicsDB" id="72033">
    <molecule id="Q8N5C7-2"/>
</dbReference>
<dbReference type="ProteomicsDB" id="72034">
    <molecule id="Q8N5C7-3"/>
</dbReference>
<dbReference type="Pumba" id="Q8N5C7"/>
<dbReference type="TopDownProteomics" id="Q8N5C7-2">
    <molecule id="Q8N5C7-2"/>
</dbReference>
<dbReference type="Antibodypedia" id="65167">
    <property type="antibodies" value="154 antibodies from 21 providers"/>
</dbReference>
<dbReference type="DNASU" id="56986"/>
<dbReference type="Ensembl" id="ENST00000251250.7">
    <molecule id="Q8N5C7-1"/>
    <property type="protein sequence ID" value="ENSP00000251250.6"/>
    <property type="gene ID" value="ENSG00000104047.15"/>
</dbReference>
<dbReference type="Ensembl" id="ENST00000403028.8">
    <molecule id="Q8N5C7-1"/>
    <property type="protein sequence ID" value="ENSP00000385399.3"/>
    <property type="gene ID" value="ENSG00000104047.15"/>
</dbReference>
<dbReference type="Ensembl" id="ENST00000557968.5">
    <molecule id="Q8N5C7-3"/>
    <property type="protein sequence ID" value="ENSP00000452628.1"/>
    <property type="gene ID" value="ENSG00000104047.15"/>
</dbReference>
<dbReference type="Ensembl" id="ENST00000558653.5">
    <molecule id="Q8N5C7-1"/>
    <property type="protein sequence ID" value="ENSP00000453529.1"/>
    <property type="gene ID" value="ENSG00000104047.15"/>
</dbReference>
<dbReference type="GeneID" id="56986"/>
<dbReference type="KEGG" id="hsa:56986"/>
<dbReference type="MANE-Select" id="ENST00000403028.8">
    <property type="protein sequence ID" value="ENSP00000385399.3"/>
    <property type="RefSeq nucleotide sequence ID" value="NM_001144955.2"/>
    <property type="RefSeq protein sequence ID" value="NP_001138427.1"/>
</dbReference>
<dbReference type="UCSC" id="uc001zxq.4">
    <molecule id="Q8N5C7-1"/>
    <property type="organism name" value="human"/>
</dbReference>
<dbReference type="AGR" id="HGNC:30926"/>
<dbReference type="CTD" id="56986"/>
<dbReference type="DisGeNET" id="56986"/>
<dbReference type="GeneCards" id="DTWD1"/>
<dbReference type="HGNC" id="HGNC:30926">
    <property type="gene designation" value="DTWD1"/>
</dbReference>
<dbReference type="HPA" id="ENSG00000104047">
    <property type="expression patterns" value="Low tissue specificity"/>
</dbReference>
<dbReference type="MIM" id="621116">
    <property type="type" value="gene"/>
</dbReference>
<dbReference type="neXtProt" id="NX_Q8N5C7"/>
<dbReference type="OpenTargets" id="ENSG00000104047"/>
<dbReference type="PharmGKB" id="PA142671942"/>
<dbReference type="VEuPathDB" id="HostDB:ENSG00000104047"/>
<dbReference type="eggNOG" id="KOG3795">
    <property type="taxonomic scope" value="Eukaryota"/>
</dbReference>
<dbReference type="GeneTree" id="ENSGT00940000153766"/>
<dbReference type="HOGENOM" id="CLU_069451_0_1_1"/>
<dbReference type="InParanoid" id="Q8N5C7"/>
<dbReference type="OMA" id="VNAWGLN"/>
<dbReference type="OrthoDB" id="3173at2759"/>
<dbReference type="PAN-GO" id="Q8N5C7">
    <property type="GO annotations" value="3 GO annotations based on evolutionary models"/>
</dbReference>
<dbReference type="PhylomeDB" id="Q8N5C7"/>
<dbReference type="TreeFam" id="TF324733"/>
<dbReference type="PathwayCommons" id="Q8N5C7"/>
<dbReference type="SignaLink" id="Q8N5C7"/>
<dbReference type="BioGRID-ORCS" id="56986">
    <property type="hits" value="25 hits in 1113 CRISPR screens"/>
</dbReference>
<dbReference type="ChiTaRS" id="DTWD1">
    <property type="organism name" value="human"/>
</dbReference>
<dbReference type="GeneWiki" id="DTWD1"/>
<dbReference type="GenomeRNAi" id="56986"/>
<dbReference type="Pharos" id="Q8N5C7">
    <property type="development level" value="Tdark"/>
</dbReference>
<dbReference type="PRO" id="PR:Q8N5C7"/>
<dbReference type="Proteomes" id="UP000005640">
    <property type="component" value="Chromosome 15"/>
</dbReference>
<dbReference type="RNAct" id="Q8N5C7">
    <property type="molecule type" value="protein"/>
</dbReference>
<dbReference type="Bgee" id="ENSG00000104047">
    <property type="expression patterns" value="Expressed in calcaneal tendon and 174 other cell types or tissues"/>
</dbReference>
<dbReference type="ExpressionAtlas" id="Q8N5C7">
    <property type="expression patterns" value="baseline and differential"/>
</dbReference>
<dbReference type="GO" id="GO:0005634">
    <property type="term" value="C:nucleus"/>
    <property type="evidence" value="ECO:0000314"/>
    <property type="project" value="UniProtKB"/>
</dbReference>
<dbReference type="GO" id="GO:0016432">
    <property type="term" value="F:tRNA-uridine aminocarboxypropyltransferase activity"/>
    <property type="evidence" value="ECO:0000314"/>
    <property type="project" value="UniProtKB"/>
</dbReference>
<dbReference type="GO" id="GO:0006400">
    <property type="term" value="P:tRNA modification"/>
    <property type="evidence" value="ECO:0000314"/>
    <property type="project" value="UniProtKB"/>
</dbReference>
<dbReference type="InterPro" id="IPR005636">
    <property type="entry name" value="DTW"/>
</dbReference>
<dbReference type="InterPro" id="IPR051521">
    <property type="entry name" value="tRNA_Mod/Golgi_Maint"/>
</dbReference>
<dbReference type="PANTHER" id="PTHR15627">
    <property type="entry name" value="NATURAL KILLER CELL-SPECIFIC ANTIGEN KLIP1"/>
    <property type="match status" value="1"/>
</dbReference>
<dbReference type="PANTHER" id="PTHR15627:SF8">
    <property type="entry name" value="TRNA-URIDINE AMINOCARBOXYPROPYLTRANSFERASE 1"/>
    <property type="match status" value="1"/>
</dbReference>
<dbReference type="Pfam" id="PF03942">
    <property type="entry name" value="DTW"/>
    <property type="match status" value="1"/>
</dbReference>
<dbReference type="SMART" id="SM01144">
    <property type="entry name" value="DTW"/>
    <property type="match status" value="1"/>
</dbReference>
<keyword id="KW-0007">Acetylation</keyword>
<keyword id="KW-0025">Alternative splicing</keyword>
<keyword id="KW-0539">Nucleus</keyword>
<keyword id="KW-1267">Proteomics identification</keyword>
<keyword id="KW-1185">Reference proteome</keyword>
<keyword id="KW-0949">S-adenosyl-L-methionine</keyword>
<keyword id="KW-0808">Transferase</keyword>
<keyword id="KW-0819">tRNA processing</keyword>
<protein>
    <recommendedName>
        <fullName evidence="5">tRNA-uridine aminocarboxypropyltransferase 1</fullName>
        <ecNumber evidence="1">2.5.1.25</ecNumber>
    </recommendedName>
    <alternativeName>
        <fullName evidence="5">DTW domain-containing protein 1</fullName>
    </alternativeName>
</protein>
<evidence type="ECO:0000269" key="1">
    <source>
    </source>
</evidence>
<evidence type="ECO:0000303" key="2">
    <source>
    </source>
</evidence>
<evidence type="ECO:0000303" key="3">
    <source>
    </source>
</evidence>
<evidence type="ECO:0000303" key="4">
    <source ref="1"/>
</evidence>
<evidence type="ECO:0000305" key="5"/>
<evidence type="ECO:0000312" key="6">
    <source>
        <dbReference type="HGNC" id="HGNC:30926"/>
    </source>
</evidence>
<evidence type="ECO:0007744" key="7">
    <source>
    </source>
</evidence>
<sequence length="304" mass="35248">MSLNPPIFLKRSEENSSKFVETKQSQTTSIASEDPLQNLCLASQEVLQKAQQSGRSKCLKCGGSRMFYCYTCYVPVENVPIEQIPLVKLPLKIDIIKHPNETDGKSTAIHAKLLAPEFVNIYTYPCIPEYEEKDHEVALIFPGPQSISIKDISFHLQKRIQNNVRGKNDDPDKPSFKRKRTEEQEFCDLNDSKCKGTTLKKIIFIDSTWNQTNKIFTDERLQGLLQVELKTRKTCFWRHQKGKPDTFLSTIEAIYYFLVDYHTDILKEKYRGQYDNLLFFYSFMYQLIKNAKCSGDKETGKLTH</sequence>
<proteinExistence type="evidence at protein level"/>
<gene>
    <name evidence="3 6" type="primary">DTWD1</name>
    <name evidence="4" type="ORF">MDS009</name>
</gene>